<keyword id="KW-0067">ATP-binding</keyword>
<keyword id="KW-0227">DNA damage</keyword>
<keyword id="KW-0234">DNA repair</keyword>
<keyword id="KW-0238">DNA-binding</keyword>
<keyword id="KW-0269">Exonuclease</keyword>
<keyword id="KW-0347">Helicase</keyword>
<keyword id="KW-0378">Hydrolase</keyword>
<keyword id="KW-0413">Isomerase</keyword>
<keyword id="KW-0540">Nuclease</keyword>
<keyword id="KW-0547">Nucleotide-binding</keyword>
<keyword id="KW-1185">Reference proteome</keyword>
<feature type="chain" id="PRO_0000379271" description="ATP-dependent helicase/nuclease subunit A">
    <location>
        <begin position="1"/>
        <end position="1183"/>
    </location>
</feature>
<feature type="domain" description="UvrD-like helicase ATP-binding" evidence="1">
    <location>
        <begin position="3"/>
        <end position="461"/>
    </location>
</feature>
<feature type="domain" description="UvrD-like helicase C-terminal" evidence="1">
    <location>
        <begin position="473"/>
        <end position="769"/>
    </location>
</feature>
<feature type="binding site" evidence="1">
    <location>
        <begin position="24"/>
        <end position="31"/>
    </location>
    <ligand>
        <name>ATP</name>
        <dbReference type="ChEBI" id="CHEBI:30616"/>
    </ligand>
</feature>
<name>ADDA_EXIS2</name>
<protein>
    <recommendedName>
        <fullName evidence="1">ATP-dependent helicase/nuclease subunit A</fullName>
        <ecNumber evidence="1">3.1.-.-</ecNumber>
        <ecNumber evidence="1">5.6.2.4</ecNumber>
    </recommendedName>
    <alternativeName>
        <fullName evidence="1">ATP-dependent helicase/nuclease AddA</fullName>
    </alternativeName>
    <alternativeName>
        <fullName evidence="1">DNA 3'-5' helicase AddA</fullName>
    </alternativeName>
</protein>
<evidence type="ECO:0000255" key="1">
    <source>
        <dbReference type="HAMAP-Rule" id="MF_01451"/>
    </source>
</evidence>
<sequence length="1183" mass="136605">MSVQWTDEQQRAIDARGGHILVSAAAGSGKTAVLVERLTQRVINQEDPLTADRILVATFTNAAAKEMKTRVIEAIEAKIKVAPDDLYLKKQRQMMNRAQITTIHSFCLSILRENYYRIGLDPAFRIAEEAELLLLQDDVLEEVFESFYASADPAFYELIDSYTSDRDDQAMLTLISNLYRFSRSLPDPEAFYDHLIAQYDQPIDPDESSLLTRLFELEWERVGPVINRYMELSYRLRQSGYDEMADLLVQDVTPVRRINPEQDRWTTVALAFQAVEFGRWKGIRGDEEMKKFQTERTRLVSDLKKMRDLFVEKDGVDYLEDLRSQLGHVEMIVTLVRSFSAAYLEAKQQRGIVDFSDLEHFALAILEENGEPTDVARLLQERFIEVLVDEYQDTNEVQERILRLVSKSDEATGNLFMVGDVKQSIYKFRHAEPGLFLNKFKRFQQTEVGTRIDLTKNFRSRLEVLDGTNHIFRQVMDEAVGEIDYDEAAYLRLGNLGYVDSTQVDPELLLVDQTDTNKEELEAQVIATRIIEMVNDENPYLVFDAKQKRFRKCEYRDIVILVRSRGKRVQALVDVFEQYELPVYADTTGGYFQATEIQIMMSLLKTIDNPLQDIPFASVLRSPIFGLTDRDLGRIRAKSKDGSFYEAAILVAKEQTPLGLRVDEALNQLHHWRTEARGKSLASLIRSLFDQTGYFEYVGCLNGGRSRQANLNALYERAHQYEASGYRGLYRFLRLIHRLVERGEDFSEARSLGEDEDVVRIMTIHQSKGLEFPVTIVSQLGKQFNKQDQIQAIQLHKTYGIALDAIDPVKRLRSGTLLKEVIRREMDREMKAEEMRVLYVAMTRAKEKLILVGAIKGLEDQLIKWQDQPLDELLLPEMDRRNAKTYADWVVPAVLRNFLLSEDGPRWSFRIIALDEIAPYQELTKMVEQLEHVRVLEKIDHAGDETLNIQIEAAFAYQYPYQVATDTAAKQTVTELKRTEQLERAAFESTHRQSTYYRTPQFLGPTLTGAERGTVLHLAMQLYESGRSFEEQILDWEQAERISSLEAQTMREAIPELTTFLASDTGQLFEQRLLAGEVYRELPFTYKIDSARFRSDWHGPSDQAVMQGIVDCLIRDGDTYILLDYKSDQVFETTDNQNQAEVLRTRYATQLNLYQEALEAILHIRISRKLIYAFALHEVIEIY</sequence>
<comment type="function">
    <text evidence="1">The heterodimer acts as both an ATP-dependent DNA helicase and an ATP-dependent, dual-direction single-stranded exonuclease. Recognizes the chi site generating a DNA molecule suitable for the initiation of homologous recombination. The AddA nuclease domain is required for chi fragment generation; this subunit has the helicase and 3' -&gt; 5' nuclease activities.</text>
</comment>
<comment type="catalytic activity">
    <reaction evidence="1">
        <text>Couples ATP hydrolysis with the unwinding of duplex DNA by translocating in the 3'-5' direction.</text>
        <dbReference type="EC" id="5.6.2.4"/>
    </reaction>
</comment>
<comment type="catalytic activity">
    <reaction evidence="1">
        <text>ATP + H2O = ADP + phosphate + H(+)</text>
        <dbReference type="Rhea" id="RHEA:13065"/>
        <dbReference type="ChEBI" id="CHEBI:15377"/>
        <dbReference type="ChEBI" id="CHEBI:15378"/>
        <dbReference type="ChEBI" id="CHEBI:30616"/>
        <dbReference type="ChEBI" id="CHEBI:43474"/>
        <dbReference type="ChEBI" id="CHEBI:456216"/>
        <dbReference type="EC" id="5.6.2.4"/>
    </reaction>
</comment>
<comment type="cofactor">
    <cofactor evidence="1">
        <name>Mg(2+)</name>
        <dbReference type="ChEBI" id="CHEBI:18420"/>
    </cofactor>
</comment>
<comment type="subunit">
    <text evidence="1">Heterodimer of AddA and AddB/RexB.</text>
</comment>
<comment type="similarity">
    <text evidence="1">Belongs to the helicase family. AddA subfamily.</text>
</comment>
<organism>
    <name type="scientific">Exiguobacterium sibiricum (strain DSM 17290 / CCUG 55495 / CIP 109462 / JCM 13490 / 255-15)</name>
    <dbReference type="NCBI Taxonomy" id="262543"/>
    <lineage>
        <taxon>Bacteria</taxon>
        <taxon>Bacillati</taxon>
        <taxon>Bacillota</taxon>
        <taxon>Bacilli</taxon>
        <taxon>Bacillales</taxon>
        <taxon>Bacillales Family XII. Incertae Sedis</taxon>
        <taxon>Exiguobacterium</taxon>
    </lineage>
</organism>
<accession>B1YKM8</accession>
<proteinExistence type="inferred from homology"/>
<reference key="1">
    <citation type="submission" date="2008-04" db="EMBL/GenBank/DDBJ databases">
        <title>Complete sequence of chromosome of Exiguobacterium sibiricum 255-15.</title>
        <authorList>
            <consortium name="US DOE Joint Genome Institute"/>
            <person name="Copeland A."/>
            <person name="Lucas S."/>
            <person name="Lapidus A."/>
            <person name="Glavina del Rio T."/>
            <person name="Dalin E."/>
            <person name="Tice H."/>
            <person name="Bruce D."/>
            <person name="Goodwin L."/>
            <person name="Pitluck S."/>
            <person name="Kiss H."/>
            <person name="Chertkov O."/>
            <person name="Monk C."/>
            <person name="Brettin T."/>
            <person name="Detter J.C."/>
            <person name="Han C."/>
            <person name="Kuske C.R."/>
            <person name="Schmutz J."/>
            <person name="Larimer F."/>
            <person name="Land M."/>
            <person name="Hauser L."/>
            <person name="Kyrpides N."/>
            <person name="Mikhailova N."/>
            <person name="Vishnivetskaya T."/>
            <person name="Rodrigues D.F."/>
            <person name="Gilichinsky D."/>
            <person name="Tiedje J."/>
            <person name="Richardson P."/>
        </authorList>
    </citation>
    <scope>NUCLEOTIDE SEQUENCE [LARGE SCALE GENOMIC DNA]</scope>
    <source>
        <strain>DSM 17290 / CCUG 55495 / CIP 109462 / JCM 13490 / 255-15</strain>
    </source>
</reference>
<dbReference type="EC" id="3.1.-.-" evidence="1"/>
<dbReference type="EC" id="5.6.2.4" evidence="1"/>
<dbReference type="EMBL" id="CP001022">
    <property type="protein sequence ID" value="ACB60211.1"/>
    <property type="molecule type" value="Genomic_DNA"/>
</dbReference>
<dbReference type="RefSeq" id="WP_012369635.1">
    <property type="nucleotide sequence ID" value="NC_010556.1"/>
</dbReference>
<dbReference type="SMR" id="B1YKM8"/>
<dbReference type="STRING" id="262543.Exig_0730"/>
<dbReference type="KEGG" id="esi:Exig_0730"/>
<dbReference type="eggNOG" id="COG1074">
    <property type="taxonomic scope" value="Bacteria"/>
</dbReference>
<dbReference type="HOGENOM" id="CLU_001114_3_1_9"/>
<dbReference type="OrthoDB" id="9810135at2"/>
<dbReference type="Proteomes" id="UP000001681">
    <property type="component" value="Chromosome"/>
</dbReference>
<dbReference type="GO" id="GO:0005829">
    <property type="term" value="C:cytosol"/>
    <property type="evidence" value="ECO:0007669"/>
    <property type="project" value="TreeGrafter"/>
</dbReference>
<dbReference type="GO" id="GO:0033202">
    <property type="term" value="C:DNA helicase complex"/>
    <property type="evidence" value="ECO:0007669"/>
    <property type="project" value="TreeGrafter"/>
</dbReference>
<dbReference type="GO" id="GO:0043138">
    <property type="term" value="F:3'-5' DNA helicase activity"/>
    <property type="evidence" value="ECO:0007669"/>
    <property type="project" value="UniProtKB-UniRule"/>
</dbReference>
<dbReference type="GO" id="GO:0008408">
    <property type="term" value="F:3'-5' exonuclease activity"/>
    <property type="evidence" value="ECO:0007669"/>
    <property type="project" value="UniProtKB-UniRule"/>
</dbReference>
<dbReference type="GO" id="GO:0005524">
    <property type="term" value="F:ATP binding"/>
    <property type="evidence" value="ECO:0007669"/>
    <property type="project" value="UniProtKB-UniRule"/>
</dbReference>
<dbReference type="GO" id="GO:0016887">
    <property type="term" value="F:ATP hydrolysis activity"/>
    <property type="evidence" value="ECO:0007669"/>
    <property type="project" value="RHEA"/>
</dbReference>
<dbReference type="GO" id="GO:0003690">
    <property type="term" value="F:double-stranded DNA binding"/>
    <property type="evidence" value="ECO:0007669"/>
    <property type="project" value="UniProtKB-UniRule"/>
</dbReference>
<dbReference type="GO" id="GO:0000724">
    <property type="term" value="P:double-strand break repair via homologous recombination"/>
    <property type="evidence" value="ECO:0007669"/>
    <property type="project" value="UniProtKB-UniRule"/>
</dbReference>
<dbReference type="CDD" id="cd17932">
    <property type="entry name" value="DEXQc_UvrD"/>
    <property type="match status" value="1"/>
</dbReference>
<dbReference type="FunFam" id="3.40.50.300:FF:001236">
    <property type="entry name" value="ATP-dependent helicase/nuclease subunit A"/>
    <property type="match status" value="1"/>
</dbReference>
<dbReference type="Gene3D" id="3.90.320.10">
    <property type="match status" value="1"/>
</dbReference>
<dbReference type="Gene3D" id="3.40.50.300">
    <property type="entry name" value="P-loop containing nucleotide triphosphate hydrolases"/>
    <property type="match status" value="4"/>
</dbReference>
<dbReference type="HAMAP" id="MF_01451">
    <property type="entry name" value="AddA"/>
    <property type="match status" value="1"/>
</dbReference>
<dbReference type="InterPro" id="IPR014152">
    <property type="entry name" value="AddA"/>
</dbReference>
<dbReference type="InterPro" id="IPR014017">
    <property type="entry name" value="DNA_helicase_UvrD-like_C"/>
</dbReference>
<dbReference type="InterPro" id="IPR000212">
    <property type="entry name" value="DNA_helicase_UvrD/REP"/>
</dbReference>
<dbReference type="InterPro" id="IPR027417">
    <property type="entry name" value="P-loop_NTPase"/>
</dbReference>
<dbReference type="InterPro" id="IPR011604">
    <property type="entry name" value="PDDEXK-like_dom_sf"/>
</dbReference>
<dbReference type="InterPro" id="IPR038726">
    <property type="entry name" value="PDDEXK_AddAB-type"/>
</dbReference>
<dbReference type="InterPro" id="IPR011335">
    <property type="entry name" value="Restrct_endonuc-II-like"/>
</dbReference>
<dbReference type="InterPro" id="IPR014016">
    <property type="entry name" value="UvrD-like_ATP-bd"/>
</dbReference>
<dbReference type="NCBIfam" id="TIGR02785">
    <property type="entry name" value="addA_Gpos"/>
    <property type="match status" value="1"/>
</dbReference>
<dbReference type="PANTHER" id="PTHR11070:SF48">
    <property type="entry name" value="ATP-DEPENDENT HELICASE_NUCLEASE SUBUNIT A"/>
    <property type="match status" value="1"/>
</dbReference>
<dbReference type="PANTHER" id="PTHR11070">
    <property type="entry name" value="UVRD / RECB / PCRA DNA HELICASE FAMILY MEMBER"/>
    <property type="match status" value="1"/>
</dbReference>
<dbReference type="Pfam" id="PF12705">
    <property type="entry name" value="PDDEXK_1"/>
    <property type="match status" value="1"/>
</dbReference>
<dbReference type="Pfam" id="PF00580">
    <property type="entry name" value="UvrD-helicase"/>
    <property type="match status" value="1"/>
</dbReference>
<dbReference type="Pfam" id="PF13361">
    <property type="entry name" value="UvrD_C"/>
    <property type="match status" value="1"/>
</dbReference>
<dbReference type="SUPFAM" id="SSF52540">
    <property type="entry name" value="P-loop containing nucleoside triphosphate hydrolases"/>
    <property type="match status" value="1"/>
</dbReference>
<dbReference type="SUPFAM" id="SSF52980">
    <property type="entry name" value="Restriction endonuclease-like"/>
    <property type="match status" value="1"/>
</dbReference>
<dbReference type="PROSITE" id="PS51198">
    <property type="entry name" value="UVRD_HELICASE_ATP_BIND"/>
    <property type="match status" value="1"/>
</dbReference>
<dbReference type="PROSITE" id="PS51217">
    <property type="entry name" value="UVRD_HELICASE_CTER"/>
    <property type="match status" value="1"/>
</dbReference>
<gene>
    <name evidence="1" type="primary">addA</name>
    <name type="ordered locus">Exig_0730</name>
</gene>